<dbReference type="EMBL" id="CP000308">
    <property type="protein sequence ID" value="ABG15197.1"/>
    <property type="molecule type" value="Genomic_DNA"/>
</dbReference>
<dbReference type="RefSeq" id="WP_002209017.1">
    <property type="nucleotide sequence ID" value="NZ_CP009906.1"/>
</dbReference>
<dbReference type="SMR" id="Q1C2X5"/>
<dbReference type="GeneID" id="57974366"/>
<dbReference type="KEGG" id="ypa:YPA_3235"/>
<dbReference type="Proteomes" id="UP000001971">
    <property type="component" value="Chromosome"/>
</dbReference>
<dbReference type="GO" id="GO:0005886">
    <property type="term" value="C:plasma membrane"/>
    <property type="evidence" value="ECO:0007669"/>
    <property type="project" value="UniProtKB-SubCell"/>
</dbReference>
<dbReference type="GO" id="GO:0008381">
    <property type="term" value="F:mechanosensitive monoatomic ion channel activity"/>
    <property type="evidence" value="ECO:0007669"/>
    <property type="project" value="UniProtKB-UniRule"/>
</dbReference>
<dbReference type="FunFam" id="1.10.1200.120:FF:000001">
    <property type="entry name" value="Large-conductance mechanosensitive channel"/>
    <property type="match status" value="1"/>
</dbReference>
<dbReference type="Gene3D" id="1.10.1200.120">
    <property type="entry name" value="Large-conductance mechanosensitive channel, MscL, domain 1"/>
    <property type="match status" value="1"/>
</dbReference>
<dbReference type="HAMAP" id="MF_00115">
    <property type="entry name" value="MscL"/>
    <property type="match status" value="1"/>
</dbReference>
<dbReference type="InterPro" id="IPR019823">
    <property type="entry name" value="Mechanosensitive_channel_CS"/>
</dbReference>
<dbReference type="InterPro" id="IPR001185">
    <property type="entry name" value="MS_channel"/>
</dbReference>
<dbReference type="InterPro" id="IPR037673">
    <property type="entry name" value="MSC/AndL"/>
</dbReference>
<dbReference type="InterPro" id="IPR036019">
    <property type="entry name" value="MscL_channel"/>
</dbReference>
<dbReference type="NCBIfam" id="TIGR00220">
    <property type="entry name" value="mscL"/>
    <property type="match status" value="1"/>
</dbReference>
<dbReference type="NCBIfam" id="NF001841">
    <property type="entry name" value="PRK00567.1-1"/>
    <property type="match status" value="1"/>
</dbReference>
<dbReference type="NCBIfam" id="NF001843">
    <property type="entry name" value="PRK00567.1-4"/>
    <property type="match status" value="1"/>
</dbReference>
<dbReference type="PANTHER" id="PTHR30266:SF2">
    <property type="entry name" value="LARGE-CONDUCTANCE MECHANOSENSITIVE CHANNEL"/>
    <property type="match status" value="1"/>
</dbReference>
<dbReference type="PANTHER" id="PTHR30266">
    <property type="entry name" value="MECHANOSENSITIVE CHANNEL MSCL"/>
    <property type="match status" value="1"/>
</dbReference>
<dbReference type="Pfam" id="PF01741">
    <property type="entry name" value="MscL"/>
    <property type="match status" value="1"/>
</dbReference>
<dbReference type="PRINTS" id="PR01264">
    <property type="entry name" value="MECHCHANNEL"/>
</dbReference>
<dbReference type="SUPFAM" id="SSF81330">
    <property type="entry name" value="Gated mechanosensitive channel"/>
    <property type="match status" value="1"/>
</dbReference>
<dbReference type="PROSITE" id="PS01327">
    <property type="entry name" value="MSCL"/>
    <property type="match status" value="1"/>
</dbReference>
<proteinExistence type="inferred from homology"/>
<sequence>MSFMKEFREFAMRGNVVDLAVGVIIGAAFGRIVSSLVADIIMPPLGLLLGGVDFKQFHFVLRAAEGTIPAVVMNYGTFIQSIFDFVIVALAIFSAVKLMNKLRREKAEEEPATPPAPTTEEILLAEIRDLLKAQHTK</sequence>
<organism>
    <name type="scientific">Yersinia pestis bv. Antiqua (strain Antiqua)</name>
    <dbReference type="NCBI Taxonomy" id="360102"/>
    <lineage>
        <taxon>Bacteria</taxon>
        <taxon>Pseudomonadati</taxon>
        <taxon>Pseudomonadota</taxon>
        <taxon>Gammaproteobacteria</taxon>
        <taxon>Enterobacterales</taxon>
        <taxon>Yersiniaceae</taxon>
        <taxon>Yersinia</taxon>
    </lineage>
</organism>
<feature type="chain" id="PRO_1000015435" description="Large-conductance mechanosensitive channel">
    <location>
        <begin position="1"/>
        <end position="137"/>
    </location>
</feature>
<feature type="transmembrane region" description="Helical" evidence="1">
    <location>
        <begin position="10"/>
        <end position="30"/>
    </location>
</feature>
<feature type="transmembrane region" description="Helical" evidence="1">
    <location>
        <begin position="76"/>
        <end position="96"/>
    </location>
</feature>
<keyword id="KW-0997">Cell inner membrane</keyword>
<keyword id="KW-1003">Cell membrane</keyword>
<keyword id="KW-0407">Ion channel</keyword>
<keyword id="KW-0406">Ion transport</keyword>
<keyword id="KW-0472">Membrane</keyword>
<keyword id="KW-0812">Transmembrane</keyword>
<keyword id="KW-1133">Transmembrane helix</keyword>
<keyword id="KW-0813">Transport</keyword>
<reference key="1">
    <citation type="journal article" date="2006" name="J. Bacteriol.">
        <title>Complete genome sequence of Yersinia pestis strains Antiqua and Nepal516: evidence of gene reduction in an emerging pathogen.</title>
        <authorList>
            <person name="Chain P.S.G."/>
            <person name="Hu P."/>
            <person name="Malfatti S.A."/>
            <person name="Radnedge L."/>
            <person name="Larimer F."/>
            <person name="Vergez L.M."/>
            <person name="Worsham P."/>
            <person name="Chu M.C."/>
            <person name="Andersen G.L."/>
        </authorList>
    </citation>
    <scope>NUCLEOTIDE SEQUENCE [LARGE SCALE GENOMIC DNA]</scope>
    <source>
        <strain>Antiqua</strain>
    </source>
</reference>
<accession>Q1C2X5</accession>
<protein>
    <recommendedName>
        <fullName evidence="1">Large-conductance mechanosensitive channel</fullName>
    </recommendedName>
</protein>
<gene>
    <name evidence="1" type="primary">mscL</name>
    <name type="ordered locus">YPA_3235</name>
</gene>
<name>MSCL_YERPA</name>
<comment type="function">
    <text evidence="1">Channel that opens in response to stretch forces in the membrane lipid bilayer. May participate in the regulation of osmotic pressure changes within the cell.</text>
</comment>
<comment type="subunit">
    <text evidence="1">Homopentamer.</text>
</comment>
<comment type="subcellular location">
    <subcellularLocation>
        <location evidence="1">Cell inner membrane</location>
        <topology evidence="1">Multi-pass membrane protein</topology>
    </subcellularLocation>
</comment>
<comment type="similarity">
    <text evidence="1">Belongs to the MscL family.</text>
</comment>
<evidence type="ECO:0000255" key="1">
    <source>
        <dbReference type="HAMAP-Rule" id="MF_00115"/>
    </source>
</evidence>